<evidence type="ECO:0000255" key="1">
    <source>
        <dbReference type="HAMAP-Rule" id="MF_01357"/>
    </source>
</evidence>
<comment type="function">
    <text evidence="1">NDH-1 shuttles electrons from NADH, via FMN and iron-sulfur (Fe-S) centers, to quinones in the respiratory chain. The immediate electron acceptor for the enzyme in this species is believed to be ubiquinone. Couples the redox reaction to proton translocation (for every two electrons transferred, four hydrogen ions are translocated across the cytoplasmic membrane), and thus conserves the redox energy in a proton gradient.</text>
</comment>
<comment type="catalytic activity">
    <reaction evidence="1">
        <text>a quinone + NADH + 5 H(+)(in) = a quinol + NAD(+) + 4 H(+)(out)</text>
        <dbReference type="Rhea" id="RHEA:57888"/>
        <dbReference type="ChEBI" id="CHEBI:15378"/>
        <dbReference type="ChEBI" id="CHEBI:24646"/>
        <dbReference type="ChEBI" id="CHEBI:57540"/>
        <dbReference type="ChEBI" id="CHEBI:57945"/>
        <dbReference type="ChEBI" id="CHEBI:132124"/>
    </reaction>
</comment>
<comment type="subunit">
    <text evidence="1">NDH-1 is composed of 14 different subunits. Subunits NuoB, C, D, E, F, and G constitute the peripheral sector of the complex.</text>
</comment>
<comment type="subcellular location">
    <subcellularLocation>
        <location evidence="1">Cell inner membrane</location>
        <topology evidence="1">Peripheral membrane protein</topology>
        <orientation evidence="1">Cytoplasmic side</orientation>
    </subcellularLocation>
</comment>
<comment type="similarity">
    <text evidence="1">Belongs to the complex I 30 kDa subunit family.</text>
</comment>
<keyword id="KW-0997">Cell inner membrane</keyword>
<keyword id="KW-1003">Cell membrane</keyword>
<keyword id="KW-0472">Membrane</keyword>
<keyword id="KW-0520">NAD</keyword>
<keyword id="KW-0874">Quinone</keyword>
<keyword id="KW-1185">Reference proteome</keyword>
<keyword id="KW-1278">Translocase</keyword>
<keyword id="KW-0813">Transport</keyword>
<keyword id="KW-0830">Ubiquinone</keyword>
<accession>Q8P7T4</accession>
<sequence>MAEQASSFTDRLAARFAGAQISVVQPRGEVTLEVAAAQWHATCLALRDELGFEQLSDLCGVDYLGYGSDEWDTADVSSQGFSRGVEGKALGRFAWGEFPSQESSNGAQPQQLPTQRFAVVAQLISYQHNQRLRVRCYAPDEQVPVVASLTDIWPGVNWFEREAFDLFGIVFDGHPDLRRILTDYGFVGHPFRKDFPLIGNVEVRYDDERKRVVYEPVTSVEPRVGVPRVIRDDARYETAAGEVGKSETAK</sequence>
<protein>
    <recommendedName>
        <fullName evidence="1">NADH-quinone oxidoreductase subunit C</fullName>
        <ecNumber evidence="1">7.1.1.-</ecNumber>
    </recommendedName>
    <alternativeName>
        <fullName evidence="1">NADH dehydrogenase I subunit C</fullName>
    </alternativeName>
    <alternativeName>
        <fullName evidence="1">NDH-1 subunit C</fullName>
    </alternativeName>
</protein>
<organism>
    <name type="scientific">Xanthomonas campestris pv. campestris (strain ATCC 33913 / DSM 3586 / NCPPB 528 / LMG 568 / P 25)</name>
    <dbReference type="NCBI Taxonomy" id="190485"/>
    <lineage>
        <taxon>Bacteria</taxon>
        <taxon>Pseudomonadati</taxon>
        <taxon>Pseudomonadota</taxon>
        <taxon>Gammaproteobacteria</taxon>
        <taxon>Lysobacterales</taxon>
        <taxon>Lysobacteraceae</taxon>
        <taxon>Xanthomonas</taxon>
    </lineage>
</organism>
<dbReference type="EC" id="7.1.1.-" evidence="1"/>
<dbReference type="EMBL" id="AE008922">
    <property type="protein sequence ID" value="AAM41799.1"/>
    <property type="molecule type" value="Genomic_DNA"/>
</dbReference>
<dbReference type="RefSeq" id="NP_637875.1">
    <property type="nucleotide sequence ID" value="NC_003902.1"/>
</dbReference>
<dbReference type="RefSeq" id="WP_011037657.1">
    <property type="nucleotide sequence ID" value="NC_003902.1"/>
</dbReference>
<dbReference type="SMR" id="Q8P7T4"/>
<dbReference type="STRING" id="190485.XCC2526"/>
<dbReference type="EnsemblBacteria" id="AAM41799">
    <property type="protein sequence ID" value="AAM41799"/>
    <property type="gene ID" value="XCC2526"/>
</dbReference>
<dbReference type="KEGG" id="xcc:XCC2526"/>
<dbReference type="PATRIC" id="fig|190485.4.peg.2692"/>
<dbReference type="eggNOG" id="COG0852">
    <property type="taxonomic scope" value="Bacteria"/>
</dbReference>
<dbReference type="HOGENOM" id="CLU_042628_2_1_6"/>
<dbReference type="OrthoDB" id="9803286at2"/>
<dbReference type="Proteomes" id="UP000001010">
    <property type="component" value="Chromosome"/>
</dbReference>
<dbReference type="GO" id="GO:0005886">
    <property type="term" value="C:plasma membrane"/>
    <property type="evidence" value="ECO:0007669"/>
    <property type="project" value="UniProtKB-SubCell"/>
</dbReference>
<dbReference type="GO" id="GO:0008137">
    <property type="term" value="F:NADH dehydrogenase (ubiquinone) activity"/>
    <property type="evidence" value="ECO:0007669"/>
    <property type="project" value="InterPro"/>
</dbReference>
<dbReference type="GO" id="GO:0050136">
    <property type="term" value="F:NADH:ubiquinone reductase (non-electrogenic) activity"/>
    <property type="evidence" value="ECO:0007669"/>
    <property type="project" value="UniProtKB-UniRule"/>
</dbReference>
<dbReference type="GO" id="GO:0048038">
    <property type="term" value="F:quinone binding"/>
    <property type="evidence" value="ECO:0007669"/>
    <property type="project" value="UniProtKB-KW"/>
</dbReference>
<dbReference type="Gene3D" id="3.30.460.80">
    <property type="entry name" value="NADH:ubiquinone oxidoreductase, 30kDa subunit"/>
    <property type="match status" value="1"/>
</dbReference>
<dbReference type="HAMAP" id="MF_01357">
    <property type="entry name" value="NDH1_NuoC"/>
    <property type="match status" value="1"/>
</dbReference>
<dbReference type="InterPro" id="IPR010218">
    <property type="entry name" value="NADH_DH_suC"/>
</dbReference>
<dbReference type="InterPro" id="IPR037232">
    <property type="entry name" value="NADH_quin_OxRdtase_su_C/D-like"/>
</dbReference>
<dbReference type="InterPro" id="IPR001268">
    <property type="entry name" value="NADH_UbQ_OxRdtase_30kDa_su"/>
</dbReference>
<dbReference type="InterPro" id="IPR020396">
    <property type="entry name" value="NADH_UbQ_OxRdtase_CS"/>
</dbReference>
<dbReference type="NCBIfam" id="NF004730">
    <property type="entry name" value="PRK06074.1-1"/>
    <property type="match status" value="1"/>
</dbReference>
<dbReference type="NCBIfam" id="NF004732">
    <property type="entry name" value="PRK06074.1-4"/>
    <property type="match status" value="1"/>
</dbReference>
<dbReference type="PANTHER" id="PTHR10884:SF14">
    <property type="entry name" value="NADH DEHYDROGENASE [UBIQUINONE] IRON-SULFUR PROTEIN 3, MITOCHONDRIAL"/>
    <property type="match status" value="1"/>
</dbReference>
<dbReference type="PANTHER" id="PTHR10884">
    <property type="entry name" value="NADH DEHYDROGENASE UBIQUINONE IRON-SULFUR PROTEIN 3"/>
    <property type="match status" value="1"/>
</dbReference>
<dbReference type="Pfam" id="PF00329">
    <property type="entry name" value="Complex1_30kDa"/>
    <property type="match status" value="1"/>
</dbReference>
<dbReference type="SUPFAM" id="SSF143243">
    <property type="entry name" value="Nqo5-like"/>
    <property type="match status" value="1"/>
</dbReference>
<dbReference type="PROSITE" id="PS00542">
    <property type="entry name" value="COMPLEX1_30K"/>
    <property type="match status" value="1"/>
</dbReference>
<name>NUOC_XANCP</name>
<proteinExistence type="inferred from homology"/>
<reference key="1">
    <citation type="journal article" date="2002" name="Nature">
        <title>Comparison of the genomes of two Xanthomonas pathogens with differing host specificities.</title>
        <authorList>
            <person name="da Silva A.C.R."/>
            <person name="Ferro J.A."/>
            <person name="Reinach F.C."/>
            <person name="Farah C.S."/>
            <person name="Furlan L.R."/>
            <person name="Quaggio R.B."/>
            <person name="Monteiro-Vitorello C.B."/>
            <person name="Van Sluys M.A."/>
            <person name="Almeida N.F. Jr."/>
            <person name="Alves L.M.C."/>
            <person name="do Amaral A.M."/>
            <person name="Bertolini M.C."/>
            <person name="Camargo L.E.A."/>
            <person name="Camarotte G."/>
            <person name="Cannavan F."/>
            <person name="Cardozo J."/>
            <person name="Chambergo F."/>
            <person name="Ciapina L.P."/>
            <person name="Cicarelli R.M.B."/>
            <person name="Coutinho L.L."/>
            <person name="Cursino-Santos J.R."/>
            <person name="El-Dorry H."/>
            <person name="Faria J.B."/>
            <person name="Ferreira A.J.S."/>
            <person name="Ferreira R.C.C."/>
            <person name="Ferro M.I.T."/>
            <person name="Formighieri E.F."/>
            <person name="Franco M.C."/>
            <person name="Greggio C.C."/>
            <person name="Gruber A."/>
            <person name="Katsuyama A.M."/>
            <person name="Kishi L.T."/>
            <person name="Leite R.P."/>
            <person name="Lemos E.G.M."/>
            <person name="Lemos M.V.F."/>
            <person name="Locali E.C."/>
            <person name="Machado M.A."/>
            <person name="Madeira A.M.B.N."/>
            <person name="Martinez-Rossi N.M."/>
            <person name="Martins E.C."/>
            <person name="Meidanis J."/>
            <person name="Menck C.F.M."/>
            <person name="Miyaki C.Y."/>
            <person name="Moon D.H."/>
            <person name="Moreira L.M."/>
            <person name="Novo M.T.M."/>
            <person name="Okura V.K."/>
            <person name="Oliveira M.C."/>
            <person name="Oliveira V.R."/>
            <person name="Pereira H.A."/>
            <person name="Rossi A."/>
            <person name="Sena J.A.D."/>
            <person name="Silva C."/>
            <person name="de Souza R.F."/>
            <person name="Spinola L.A.F."/>
            <person name="Takita M.A."/>
            <person name="Tamura R.E."/>
            <person name="Teixeira E.C."/>
            <person name="Tezza R.I.D."/>
            <person name="Trindade dos Santos M."/>
            <person name="Truffi D."/>
            <person name="Tsai S.M."/>
            <person name="White F.F."/>
            <person name="Setubal J.C."/>
            <person name="Kitajima J.P."/>
        </authorList>
    </citation>
    <scope>NUCLEOTIDE SEQUENCE [LARGE SCALE GENOMIC DNA]</scope>
    <source>
        <strain>ATCC 33913 / DSM 3586 / NCPPB 528 / LMG 568 / P 25</strain>
    </source>
</reference>
<gene>
    <name evidence="1" type="primary">nuoC</name>
    <name type="ordered locus">XCC2526</name>
</gene>
<feature type="chain" id="PRO_0000358224" description="NADH-quinone oxidoreductase subunit C">
    <location>
        <begin position="1"/>
        <end position="250"/>
    </location>
</feature>